<proteinExistence type="inferred from homology"/>
<evidence type="ECO:0000250" key="1">
    <source>
        <dbReference type="UniProtKB" id="P37329"/>
    </source>
</evidence>
<evidence type="ECO:0000255" key="2">
    <source>
        <dbReference type="PROSITE-ProRule" id="PRU00303"/>
    </source>
</evidence>
<evidence type="ECO:0000305" key="3"/>
<reference key="1">
    <citation type="journal article" date="1998" name="Microbiology">
        <title>The yvsA-yvqA (293 degrees - 289 degrees) region of the Bacillus subtilis chromosome containing genes involved in metal ion uptake and a putative sigma factor.</title>
        <authorList>
            <person name="Wipat A."/>
            <person name="Brignell C.S."/>
            <person name="Guy J.B."/>
            <person name="Rose M."/>
            <person name="Emmerson P.T."/>
            <person name="Harwood C.R."/>
        </authorList>
    </citation>
    <scope>NUCLEOTIDE SEQUENCE [GENOMIC DNA]</scope>
    <source>
        <strain>168</strain>
    </source>
</reference>
<reference key="2">
    <citation type="journal article" date="1997" name="Nature">
        <title>The complete genome sequence of the Gram-positive bacterium Bacillus subtilis.</title>
        <authorList>
            <person name="Kunst F."/>
            <person name="Ogasawara N."/>
            <person name="Moszer I."/>
            <person name="Albertini A.M."/>
            <person name="Alloni G."/>
            <person name="Azevedo V."/>
            <person name="Bertero M.G."/>
            <person name="Bessieres P."/>
            <person name="Bolotin A."/>
            <person name="Borchert S."/>
            <person name="Borriss R."/>
            <person name="Boursier L."/>
            <person name="Brans A."/>
            <person name="Braun M."/>
            <person name="Brignell S.C."/>
            <person name="Bron S."/>
            <person name="Brouillet S."/>
            <person name="Bruschi C.V."/>
            <person name="Caldwell B."/>
            <person name="Capuano V."/>
            <person name="Carter N.M."/>
            <person name="Choi S.-K."/>
            <person name="Codani J.-J."/>
            <person name="Connerton I.F."/>
            <person name="Cummings N.J."/>
            <person name="Daniel R.A."/>
            <person name="Denizot F."/>
            <person name="Devine K.M."/>
            <person name="Duesterhoeft A."/>
            <person name="Ehrlich S.D."/>
            <person name="Emmerson P.T."/>
            <person name="Entian K.-D."/>
            <person name="Errington J."/>
            <person name="Fabret C."/>
            <person name="Ferrari E."/>
            <person name="Foulger D."/>
            <person name="Fritz C."/>
            <person name="Fujita M."/>
            <person name="Fujita Y."/>
            <person name="Fuma S."/>
            <person name="Galizzi A."/>
            <person name="Galleron N."/>
            <person name="Ghim S.-Y."/>
            <person name="Glaser P."/>
            <person name="Goffeau A."/>
            <person name="Golightly E.J."/>
            <person name="Grandi G."/>
            <person name="Guiseppi G."/>
            <person name="Guy B.J."/>
            <person name="Haga K."/>
            <person name="Haiech J."/>
            <person name="Harwood C.R."/>
            <person name="Henaut A."/>
            <person name="Hilbert H."/>
            <person name="Holsappel S."/>
            <person name="Hosono S."/>
            <person name="Hullo M.-F."/>
            <person name="Itaya M."/>
            <person name="Jones L.-M."/>
            <person name="Joris B."/>
            <person name="Karamata D."/>
            <person name="Kasahara Y."/>
            <person name="Klaerr-Blanchard M."/>
            <person name="Klein C."/>
            <person name="Kobayashi Y."/>
            <person name="Koetter P."/>
            <person name="Koningstein G."/>
            <person name="Krogh S."/>
            <person name="Kumano M."/>
            <person name="Kurita K."/>
            <person name="Lapidus A."/>
            <person name="Lardinois S."/>
            <person name="Lauber J."/>
            <person name="Lazarevic V."/>
            <person name="Lee S.-M."/>
            <person name="Levine A."/>
            <person name="Liu H."/>
            <person name="Masuda S."/>
            <person name="Mauel C."/>
            <person name="Medigue C."/>
            <person name="Medina N."/>
            <person name="Mellado R.P."/>
            <person name="Mizuno M."/>
            <person name="Moestl D."/>
            <person name="Nakai S."/>
            <person name="Noback M."/>
            <person name="Noone D."/>
            <person name="O'Reilly M."/>
            <person name="Ogawa K."/>
            <person name="Ogiwara A."/>
            <person name="Oudega B."/>
            <person name="Park S.-H."/>
            <person name="Parro V."/>
            <person name="Pohl T.M."/>
            <person name="Portetelle D."/>
            <person name="Porwollik S."/>
            <person name="Prescott A.M."/>
            <person name="Presecan E."/>
            <person name="Pujic P."/>
            <person name="Purnelle B."/>
            <person name="Rapoport G."/>
            <person name="Rey M."/>
            <person name="Reynolds S."/>
            <person name="Rieger M."/>
            <person name="Rivolta C."/>
            <person name="Rocha E."/>
            <person name="Roche B."/>
            <person name="Rose M."/>
            <person name="Sadaie Y."/>
            <person name="Sato T."/>
            <person name="Scanlan E."/>
            <person name="Schleich S."/>
            <person name="Schroeter R."/>
            <person name="Scoffone F."/>
            <person name="Sekiguchi J."/>
            <person name="Sekowska A."/>
            <person name="Seror S.J."/>
            <person name="Serror P."/>
            <person name="Shin B.-S."/>
            <person name="Soldo B."/>
            <person name="Sorokin A."/>
            <person name="Tacconi E."/>
            <person name="Takagi T."/>
            <person name="Takahashi H."/>
            <person name="Takemaru K."/>
            <person name="Takeuchi M."/>
            <person name="Tamakoshi A."/>
            <person name="Tanaka T."/>
            <person name="Terpstra P."/>
            <person name="Tognoni A."/>
            <person name="Tosato V."/>
            <person name="Uchiyama S."/>
            <person name="Vandenbol M."/>
            <person name="Vannier F."/>
            <person name="Vassarotti A."/>
            <person name="Viari A."/>
            <person name="Wambutt R."/>
            <person name="Wedler E."/>
            <person name="Wedler H."/>
            <person name="Weitzenegger T."/>
            <person name="Winters P."/>
            <person name="Wipat A."/>
            <person name="Yamamoto H."/>
            <person name="Yamane K."/>
            <person name="Yasumoto K."/>
            <person name="Yata K."/>
            <person name="Yoshida K."/>
            <person name="Yoshikawa H.-F."/>
            <person name="Zumstein E."/>
            <person name="Yoshikawa H."/>
            <person name="Danchin A."/>
        </authorList>
    </citation>
    <scope>NUCLEOTIDE SEQUENCE [LARGE SCALE GENOMIC DNA]</scope>
    <source>
        <strain>168</strain>
    </source>
</reference>
<name>YVGL_BACSU</name>
<protein>
    <recommendedName>
        <fullName>Putative ABC transporter substrate-binding lipoprotein YvgL</fullName>
    </recommendedName>
</protein>
<feature type="signal peptide" evidence="2">
    <location>
        <begin position="1"/>
        <end position="20"/>
    </location>
</feature>
<feature type="chain" id="PRO_0000388362" description="Putative ABC transporter substrate-binding lipoprotein YvgL">
    <location>
        <begin position="21"/>
        <end position="260"/>
    </location>
</feature>
<feature type="binding site" evidence="1">
    <location>
        <position position="43"/>
    </location>
    <ligand>
        <name>molybdate</name>
        <dbReference type="ChEBI" id="CHEBI:36264"/>
    </ligand>
</feature>
<feature type="binding site" evidence="1">
    <location>
        <position position="71"/>
    </location>
    <ligand>
        <name>molybdate</name>
        <dbReference type="ChEBI" id="CHEBI:36264"/>
    </ligand>
</feature>
<feature type="binding site" evidence="1">
    <location>
        <position position="151"/>
    </location>
    <ligand>
        <name>molybdate</name>
        <dbReference type="ChEBI" id="CHEBI:36264"/>
    </ligand>
</feature>
<feature type="binding site" evidence="1">
    <location>
        <position position="178"/>
    </location>
    <ligand>
        <name>molybdate</name>
        <dbReference type="ChEBI" id="CHEBI:36264"/>
    </ligand>
</feature>
<feature type="binding site" evidence="1">
    <location>
        <position position="196"/>
    </location>
    <ligand>
        <name>molybdate</name>
        <dbReference type="ChEBI" id="CHEBI:36264"/>
    </ligand>
</feature>
<feature type="lipid moiety-binding region" description="N-palmitoyl cysteine" evidence="2">
    <location>
        <position position="21"/>
    </location>
</feature>
<feature type="lipid moiety-binding region" description="S-diacylglycerol cysteine" evidence="2">
    <location>
        <position position="21"/>
    </location>
</feature>
<gene>
    <name type="primary">yvgL</name>
    <name type="synonym">yvsD</name>
    <name type="ordered locus">BSU33380</name>
</gene>
<organism>
    <name type="scientific">Bacillus subtilis (strain 168)</name>
    <dbReference type="NCBI Taxonomy" id="224308"/>
    <lineage>
        <taxon>Bacteria</taxon>
        <taxon>Bacillati</taxon>
        <taxon>Bacillota</taxon>
        <taxon>Bacilli</taxon>
        <taxon>Bacillales</taxon>
        <taxon>Bacillaceae</taxon>
        <taxon>Bacillus</taxon>
    </lineage>
</organism>
<sequence>MFKKYSIFIAALTAFLLVAGCSSNQSSTDSEKKVTLTISAAASAQDALEEIQKNYEKDHQHITIQDNYGSSGALQKQISQGAGADLFFSAAEDKFKKLVDDGDIAKKDSTELVGNEIVLVVPKNGDSPVTSFSNLAESEKIALGTPESVPAGAYGKESLTKLSLWDKVKDKIVYGKDVRQVLSYVETGNVDAGVVYKTDALVSKKVNIVDEAKADTHSPIVYPLGIVKDTKHRKEAKEFYEYLQSDEAMKVFEKYGFTAE</sequence>
<keyword id="KW-1003">Cell membrane</keyword>
<keyword id="KW-0449">Lipoprotein</keyword>
<keyword id="KW-0472">Membrane</keyword>
<keyword id="KW-0479">Metal-binding</keyword>
<keyword id="KW-0500">Molybdenum</keyword>
<keyword id="KW-0564">Palmitate</keyword>
<keyword id="KW-1185">Reference proteome</keyword>
<keyword id="KW-0732">Signal</keyword>
<keyword id="KW-0826">Tungsten</keyword>
<accession>O32208</accession>
<accession>Q7B2L0</accession>
<comment type="subcellular location">
    <subcellularLocation>
        <location evidence="2">Cell membrane</location>
        <topology evidence="2">Lipid-anchor</topology>
    </subcellularLocation>
</comment>
<comment type="similarity">
    <text evidence="3">Belongs to the bacterial solute-binding protein ModA family.</text>
</comment>
<dbReference type="EMBL" id="AJ223978">
    <property type="protein sequence ID" value="CAA11714.1"/>
    <property type="molecule type" value="Genomic_DNA"/>
</dbReference>
<dbReference type="EMBL" id="AL009126">
    <property type="protein sequence ID" value="CAB15343.1"/>
    <property type="molecule type" value="Genomic_DNA"/>
</dbReference>
<dbReference type="PIR" id="A70040">
    <property type="entry name" value="A70040"/>
</dbReference>
<dbReference type="SMR" id="O32208"/>
<dbReference type="FunCoup" id="O32208">
    <property type="interactions" value="358"/>
</dbReference>
<dbReference type="STRING" id="224308.BSU33380"/>
<dbReference type="jPOST" id="O32208"/>
<dbReference type="PaxDb" id="224308-BSU33380"/>
<dbReference type="EnsemblBacteria" id="CAB15343">
    <property type="protein sequence ID" value="CAB15343"/>
    <property type="gene ID" value="BSU_33380"/>
</dbReference>
<dbReference type="GeneID" id="936003"/>
<dbReference type="KEGG" id="bsu:BSU33380"/>
<dbReference type="PATRIC" id="fig|224308.179.peg.3623"/>
<dbReference type="eggNOG" id="COG0725">
    <property type="taxonomic scope" value="Bacteria"/>
</dbReference>
<dbReference type="InParanoid" id="O32208"/>
<dbReference type="OrthoDB" id="9785015at2"/>
<dbReference type="PhylomeDB" id="O32208"/>
<dbReference type="BioCyc" id="BSUB:BSU33380-MONOMER"/>
<dbReference type="Proteomes" id="UP000001570">
    <property type="component" value="Chromosome"/>
</dbReference>
<dbReference type="GO" id="GO:0005886">
    <property type="term" value="C:plasma membrane"/>
    <property type="evidence" value="ECO:0007669"/>
    <property type="project" value="UniProtKB-SubCell"/>
</dbReference>
<dbReference type="GO" id="GO:0046872">
    <property type="term" value="F:metal ion binding"/>
    <property type="evidence" value="ECO:0007669"/>
    <property type="project" value="UniProtKB-KW"/>
</dbReference>
<dbReference type="GO" id="GO:0030973">
    <property type="term" value="F:molybdate ion binding"/>
    <property type="evidence" value="ECO:0000250"/>
    <property type="project" value="UniProtKB"/>
</dbReference>
<dbReference type="GO" id="GO:0015689">
    <property type="term" value="P:molybdate ion transport"/>
    <property type="evidence" value="ECO:0000318"/>
    <property type="project" value="GO_Central"/>
</dbReference>
<dbReference type="CDD" id="cd13537">
    <property type="entry name" value="PBP2_YvgL_like"/>
    <property type="match status" value="1"/>
</dbReference>
<dbReference type="FunFam" id="3.40.190.10:FF:000035">
    <property type="entry name" value="Molybdate ABC transporter substrate-binding protein"/>
    <property type="match status" value="1"/>
</dbReference>
<dbReference type="Gene3D" id="3.40.190.10">
    <property type="entry name" value="Periplasmic binding protein-like II"/>
    <property type="match status" value="2"/>
</dbReference>
<dbReference type="InterPro" id="IPR005950">
    <property type="entry name" value="ModA"/>
</dbReference>
<dbReference type="InterPro" id="IPR050682">
    <property type="entry name" value="ModA/WtpA"/>
</dbReference>
<dbReference type="InterPro" id="IPR041879">
    <property type="entry name" value="YvgL-like_PBP2"/>
</dbReference>
<dbReference type="NCBIfam" id="TIGR01256">
    <property type="entry name" value="modA"/>
    <property type="match status" value="1"/>
</dbReference>
<dbReference type="PANTHER" id="PTHR30632">
    <property type="entry name" value="MOLYBDATE-BINDING PERIPLASMIC PROTEIN"/>
    <property type="match status" value="1"/>
</dbReference>
<dbReference type="PANTHER" id="PTHR30632:SF0">
    <property type="entry name" value="SULFATE-BINDING PROTEIN"/>
    <property type="match status" value="1"/>
</dbReference>
<dbReference type="Pfam" id="PF13531">
    <property type="entry name" value="SBP_bac_11"/>
    <property type="match status" value="1"/>
</dbReference>
<dbReference type="PIRSF" id="PIRSF004846">
    <property type="entry name" value="ModA"/>
    <property type="match status" value="1"/>
</dbReference>
<dbReference type="SUPFAM" id="SSF53850">
    <property type="entry name" value="Periplasmic binding protein-like II"/>
    <property type="match status" value="1"/>
</dbReference>
<dbReference type="PROSITE" id="PS51257">
    <property type="entry name" value="PROKAR_LIPOPROTEIN"/>
    <property type="match status" value="1"/>
</dbReference>